<sequence>MGTLTSVAFAAAVNIRFRSFHRENIKTTITTLPKWQKRLCFSSTEDSHRFRIAKCLGNDENSNRDDSIGENGETHKSSVVKTATFEEEDEETSKSSSTTSSSNEFGSDKTSMPSTIDPTYSSFQIDSFKLMELLGPEKVDPADVKLIKDKLFGYSTFWVTKEEPFGDLGEGILFLGNLRGKKEDVFAKLQRKLVEVASDKYNLFMIEEPNSEGPDPRGGARVSFGLLRKEVSEPGPTTLWQYVIALILFLLTIGSSVELGIASQINRLPPEVVKYFTDPNAVEPPDMELLYPFVDAALPLAYGVLGILLFHELGHFLAAVPKKVKLSIPYFIPNITLGSFGAITQFKSILPDRSTKVDISLAGPFAGAALSVSMFAVGLFLSTEPDAANDLVQVPSMLFQGSLLLGLISRATLGYAALHAATVSIHPLVIAGWCGLTTTAFNMLPVGCLDGGRAVQGAFGKNALVTFGLSTYVMLGLRVLGGPLALPWGLYVLICQRTPEKPCLNDVTEVGTWRKALVGIALILVVLTLLPVWDELAEEVGIGLVTTF</sequence>
<organism>
    <name type="scientific">Arabidopsis thaliana</name>
    <name type="common">Mouse-ear cress</name>
    <dbReference type="NCBI Taxonomy" id="3702"/>
    <lineage>
        <taxon>Eukaryota</taxon>
        <taxon>Viridiplantae</taxon>
        <taxon>Streptophyta</taxon>
        <taxon>Embryophyta</taxon>
        <taxon>Tracheophyta</taxon>
        <taxon>Spermatophyta</taxon>
        <taxon>Magnoliopsida</taxon>
        <taxon>eudicotyledons</taxon>
        <taxon>Gunneridae</taxon>
        <taxon>Pentapetalae</taxon>
        <taxon>rosids</taxon>
        <taxon>malvids</taxon>
        <taxon>Brassicales</taxon>
        <taxon>Brassicaceae</taxon>
        <taxon>Camelineae</taxon>
        <taxon>Arabidopsis</taxon>
    </lineage>
</organism>
<keyword id="KW-0150">Chloroplast</keyword>
<keyword id="KW-0217">Developmental protein</keyword>
<keyword id="KW-0378">Hydrolase</keyword>
<keyword id="KW-0472">Membrane</keyword>
<keyword id="KW-0482">Metalloprotease</keyword>
<keyword id="KW-0934">Plastid</keyword>
<keyword id="KW-0645">Protease</keyword>
<keyword id="KW-1185">Reference proteome</keyword>
<keyword id="KW-0809">Transit peptide</keyword>
<keyword id="KW-0812">Transmembrane</keyword>
<keyword id="KW-1133">Transmembrane helix</keyword>
<feature type="transit peptide" description="Chloroplast" evidence="1">
    <location>
        <begin position="1"/>
        <end position="18"/>
    </location>
</feature>
<feature type="chain" id="PRO_0000428645" description="Probable zinc metalloprotease EGY1, chloroplastic">
    <location>
        <begin position="19"/>
        <end position="548"/>
    </location>
</feature>
<feature type="transmembrane region" description="Helical" evidence="1">
    <location>
        <begin position="242"/>
        <end position="262"/>
    </location>
</feature>
<feature type="transmembrane region" description="Helical" evidence="1">
    <location>
        <begin position="290"/>
        <end position="310"/>
    </location>
</feature>
<feature type="transmembrane region" description="Helical" evidence="1">
    <location>
        <begin position="326"/>
        <end position="346"/>
    </location>
</feature>
<feature type="transmembrane region" description="Helical" evidence="1">
    <location>
        <begin position="361"/>
        <end position="381"/>
    </location>
</feature>
<feature type="transmembrane region" description="Helical" evidence="1">
    <location>
        <begin position="388"/>
        <end position="408"/>
    </location>
</feature>
<feature type="transmembrane region" description="Helical" evidence="1">
    <location>
        <begin position="416"/>
        <end position="436"/>
    </location>
</feature>
<feature type="transmembrane region" description="Helical" evidence="1">
    <location>
        <begin position="474"/>
        <end position="494"/>
    </location>
</feature>
<feature type="transmembrane region" description="Helical" evidence="1">
    <location>
        <begin position="516"/>
        <end position="536"/>
    </location>
</feature>
<feature type="region of interest" description="Disordered" evidence="2">
    <location>
        <begin position="61"/>
        <end position="116"/>
    </location>
</feature>
<feature type="compositionally biased region" description="Basic and acidic residues" evidence="2">
    <location>
        <begin position="61"/>
        <end position="76"/>
    </location>
</feature>
<feature type="compositionally biased region" description="Polar residues" evidence="2">
    <location>
        <begin position="103"/>
        <end position="116"/>
    </location>
</feature>
<proteinExistence type="evidence at transcript level"/>
<reference key="1">
    <citation type="submission" date="2000-05" db="EMBL/GenBank/DDBJ databases">
        <title>Structural analysis of Arabidopsis thaliana chromosome 5. XI.</title>
        <authorList>
            <person name="Kaneko T."/>
            <person name="Katoh T."/>
            <person name="Asamizu E."/>
            <person name="Sato S."/>
            <person name="Nakamura Y."/>
            <person name="Kotani H."/>
            <person name="Tabata S."/>
        </authorList>
    </citation>
    <scope>NUCLEOTIDE SEQUENCE [LARGE SCALE GENOMIC DNA]</scope>
    <source>
        <strain>cv. Columbia</strain>
    </source>
</reference>
<reference key="2">
    <citation type="journal article" date="2017" name="Plant J.">
        <title>Araport11: a complete reannotation of the Arabidopsis thaliana reference genome.</title>
        <authorList>
            <person name="Cheng C.Y."/>
            <person name="Krishnakumar V."/>
            <person name="Chan A.P."/>
            <person name="Thibaud-Nissen F."/>
            <person name="Schobel S."/>
            <person name="Town C.D."/>
        </authorList>
    </citation>
    <scope>GENOME REANNOTATION</scope>
    <source>
        <strain>cv. Columbia</strain>
    </source>
</reference>
<reference key="3">
    <citation type="journal article" date="2003" name="Science">
        <title>Empirical analysis of transcriptional activity in the Arabidopsis genome.</title>
        <authorList>
            <person name="Yamada K."/>
            <person name="Lim J."/>
            <person name="Dale J.M."/>
            <person name="Chen H."/>
            <person name="Shinn P."/>
            <person name="Palm C.J."/>
            <person name="Southwick A.M."/>
            <person name="Wu H.C."/>
            <person name="Kim C.J."/>
            <person name="Nguyen M."/>
            <person name="Pham P.K."/>
            <person name="Cheuk R.F."/>
            <person name="Karlin-Newmann G."/>
            <person name="Liu S.X."/>
            <person name="Lam B."/>
            <person name="Sakano H."/>
            <person name="Wu T."/>
            <person name="Yu G."/>
            <person name="Miranda M."/>
            <person name="Quach H.L."/>
            <person name="Tripp M."/>
            <person name="Chang C.H."/>
            <person name="Lee J.M."/>
            <person name="Toriumi M.J."/>
            <person name="Chan M.M."/>
            <person name="Tang C.C."/>
            <person name="Onodera C.S."/>
            <person name="Deng J.M."/>
            <person name="Akiyama K."/>
            <person name="Ansari Y."/>
            <person name="Arakawa T."/>
            <person name="Banh J."/>
            <person name="Banno F."/>
            <person name="Bowser L."/>
            <person name="Brooks S.Y."/>
            <person name="Carninci P."/>
            <person name="Chao Q."/>
            <person name="Choy N."/>
            <person name="Enju A."/>
            <person name="Goldsmith A.D."/>
            <person name="Gurjal M."/>
            <person name="Hansen N.F."/>
            <person name="Hayashizaki Y."/>
            <person name="Johnson-Hopson C."/>
            <person name="Hsuan V.W."/>
            <person name="Iida K."/>
            <person name="Karnes M."/>
            <person name="Khan S."/>
            <person name="Koesema E."/>
            <person name="Ishida J."/>
            <person name="Jiang P.X."/>
            <person name="Jones T."/>
            <person name="Kawai J."/>
            <person name="Kamiya A."/>
            <person name="Meyers C."/>
            <person name="Nakajima M."/>
            <person name="Narusaka M."/>
            <person name="Seki M."/>
            <person name="Sakurai T."/>
            <person name="Satou M."/>
            <person name="Tamse R."/>
            <person name="Vaysberg M."/>
            <person name="Wallender E.K."/>
            <person name="Wong C."/>
            <person name="Yamamura Y."/>
            <person name="Yuan S."/>
            <person name="Shinozaki K."/>
            <person name="Davis R.W."/>
            <person name="Theologis A."/>
            <person name="Ecker J.R."/>
        </authorList>
    </citation>
    <scope>NUCLEOTIDE SEQUENCE [LARGE SCALE MRNA]</scope>
    <source>
        <strain>cv. Columbia</strain>
    </source>
</reference>
<reference key="4">
    <citation type="journal article" date="2005" name="Plant J.">
        <title>EGY1 encodes a membrane-associated and ATP-independent metalloprotease that is required for chloroplast development.</title>
        <authorList>
            <person name="Chen G."/>
            <person name="Bi Y.R."/>
            <person name="Li N."/>
        </authorList>
    </citation>
    <scope>FUNCTION</scope>
    <scope>TISSUE SPECIFICITY</scope>
    <scope>INDUCTION</scope>
    <scope>GENE FAMILY</scope>
    <scope>DISRUPTION PHENOTYPE</scope>
</reference>
<reference key="5">
    <citation type="journal article" date="2008" name="Plant Mol. Biol.">
        <title>EGY1 plays a role in regulation of endodermal plastid size and number that are involved in ethylene-dependent gravitropism of light-grown Arabidopsis hypocotyls.</title>
        <authorList>
            <person name="Guo D."/>
            <person name="Gao X."/>
            <person name="Li H."/>
            <person name="Zhang T."/>
            <person name="Chen G."/>
            <person name="Huang P."/>
            <person name="An L."/>
            <person name="Li N."/>
        </authorList>
    </citation>
    <scope>FUNCTION</scope>
    <scope>DISRUPTION PHENOTYPE</scope>
</reference>
<reference key="6">
    <citation type="journal article" date="2012" name="Plant Physiol.">
        <title>Arabidopsis plastid AMOS1/EGY1 integrates abscisic acid signaling to regulate global gene expression response to ammonium stress.</title>
        <authorList>
            <person name="Li B."/>
            <person name="Li Q."/>
            <person name="Xiong L."/>
            <person name="Kronzucker H.J."/>
            <person name="Kramer U."/>
            <person name="Shi W."/>
        </authorList>
    </citation>
    <scope>FUNCTION</scope>
</reference>
<evidence type="ECO:0000255" key="1"/>
<evidence type="ECO:0000256" key="2">
    <source>
        <dbReference type="SAM" id="MobiDB-lite"/>
    </source>
</evidence>
<evidence type="ECO:0000269" key="3">
    <source>
    </source>
</evidence>
<evidence type="ECO:0000269" key="4">
    <source>
    </source>
</evidence>
<evidence type="ECO:0000269" key="5">
    <source>
    </source>
</evidence>
<evidence type="ECO:0000305" key="6"/>
<comment type="function">
    <text evidence="3 4 5">Membrane-associated and ATP-independent metalloprotease required for development of both thylakoid grana and well-organized lamellae in chloroplast. Required for the accumulation of chlorophyll and chlorophyll a/b binding (CAB) proteins (from both PS I and PS II) in chloroplast membranes, and for grana formation and normal chloroplast development. Involved in the regulation of nuclear gene expression in response to ammonium stress and interacts with ABA signaling. Carries out beta-casein degradation in an ATP-independent manner in vitro.</text>
</comment>
<comment type="subcellular location">
    <subcellularLocation>
        <location evidence="6">Plastid</location>
        <location evidence="6">Chloroplast membrane</location>
        <topology evidence="6">Multi-pass membrane protein</topology>
    </subcellularLocation>
    <text>Localizes in endodermal and cortex plastids.</text>
</comment>
<comment type="tissue specificity">
    <text evidence="3">Expressed in roots, leaves, cotyledons, hypocotyls, stems, flowers and siliques.</text>
</comment>
<comment type="induction">
    <text evidence="3">By ethylene. Down-regulated by dark.</text>
</comment>
<comment type="disruption phenotype">
    <text evidence="3 4">Reduced chlorophyll accumulation, defects in chloroplast development and abnormal hypocotyl gravicurvature.</text>
</comment>
<comment type="similarity">
    <text evidence="6">Belongs to the peptidase M50B family.</text>
</comment>
<comment type="sequence caution" evidence="6">
    <conflict type="erroneous gene model prediction">
        <sequence resource="EMBL-CDS" id="BAA98209"/>
    </conflict>
</comment>
<dbReference type="EC" id="3.4.24.-"/>
<dbReference type="EMBL" id="AP002031">
    <property type="protein sequence ID" value="BAA98209.1"/>
    <property type="status" value="ALT_SEQ"/>
    <property type="molecule type" value="Genomic_DNA"/>
</dbReference>
<dbReference type="EMBL" id="CP002688">
    <property type="protein sequence ID" value="AED93947.1"/>
    <property type="molecule type" value="Genomic_DNA"/>
</dbReference>
<dbReference type="EMBL" id="AY050809">
    <property type="protein sequence ID" value="AAK92744.1"/>
    <property type="molecule type" value="mRNA"/>
</dbReference>
<dbReference type="EMBL" id="BT001978">
    <property type="protein sequence ID" value="AAN71977.1"/>
    <property type="molecule type" value="mRNA"/>
</dbReference>
<dbReference type="RefSeq" id="NP_198372.1">
    <property type="nucleotide sequence ID" value="NM_122913.4"/>
</dbReference>
<dbReference type="FunCoup" id="Q949Y5">
    <property type="interactions" value="953"/>
</dbReference>
<dbReference type="STRING" id="3702.Q949Y5"/>
<dbReference type="MEROPS" id="M50.A02"/>
<dbReference type="iPTMnet" id="Q949Y5"/>
<dbReference type="PaxDb" id="3702-AT5G35220.1"/>
<dbReference type="ProteomicsDB" id="220754"/>
<dbReference type="EnsemblPlants" id="AT5G35220.1">
    <property type="protein sequence ID" value="AT5G35220.1"/>
    <property type="gene ID" value="AT5G35220"/>
</dbReference>
<dbReference type="GeneID" id="833476"/>
<dbReference type="Gramene" id="AT5G35220.1">
    <property type="protein sequence ID" value="AT5G35220.1"/>
    <property type="gene ID" value="AT5G35220"/>
</dbReference>
<dbReference type="KEGG" id="ath:AT5G35220"/>
<dbReference type="Araport" id="AT5G35220"/>
<dbReference type="TAIR" id="AT5G35220">
    <property type="gene designation" value="EGY1"/>
</dbReference>
<dbReference type="eggNOG" id="ENOG502QUAP">
    <property type="taxonomic scope" value="Eukaryota"/>
</dbReference>
<dbReference type="HOGENOM" id="CLU_028221_1_1_1"/>
<dbReference type="InParanoid" id="Q949Y5"/>
<dbReference type="OMA" id="NAIDPPD"/>
<dbReference type="OrthoDB" id="195057at2759"/>
<dbReference type="PhylomeDB" id="Q949Y5"/>
<dbReference type="PRO" id="PR:Q949Y5"/>
<dbReference type="Proteomes" id="UP000006548">
    <property type="component" value="Chromosome 5"/>
</dbReference>
<dbReference type="ExpressionAtlas" id="Q949Y5">
    <property type="expression patterns" value="baseline and differential"/>
</dbReference>
<dbReference type="GO" id="GO:0009507">
    <property type="term" value="C:chloroplast"/>
    <property type="evidence" value="ECO:0000314"/>
    <property type="project" value="TAIR"/>
</dbReference>
<dbReference type="GO" id="GO:0031969">
    <property type="term" value="C:chloroplast membrane"/>
    <property type="evidence" value="ECO:0007669"/>
    <property type="project" value="UniProtKB-SubCell"/>
</dbReference>
<dbReference type="GO" id="GO:0004222">
    <property type="term" value="F:metalloendopeptidase activity"/>
    <property type="evidence" value="ECO:0000314"/>
    <property type="project" value="TAIR"/>
</dbReference>
<dbReference type="GO" id="GO:0009658">
    <property type="term" value="P:chloroplast organization"/>
    <property type="evidence" value="ECO:0000315"/>
    <property type="project" value="TAIR"/>
</dbReference>
<dbReference type="GO" id="GO:0009630">
    <property type="term" value="P:gravitropism"/>
    <property type="evidence" value="ECO:0000315"/>
    <property type="project" value="TAIR"/>
</dbReference>
<dbReference type="GO" id="GO:0009959">
    <property type="term" value="P:negative gravitropism"/>
    <property type="evidence" value="ECO:0000315"/>
    <property type="project" value="TAIR"/>
</dbReference>
<dbReference type="GO" id="GO:0048564">
    <property type="term" value="P:photosystem I assembly"/>
    <property type="evidence" value="ECO:0000315"/>
    <property type="project" value="TAIR"/>
</dbReference>
<dbReference type="GO" id="GO:0010207">
    <property type="term" value="P:photosystem II assembly"/>
    <property type="evidence" value="ECO:0000315"/>
    <property type="project" value="TAIR"/>
</dbReference>
<dbReference type="GO" id="GO:0006508">
    <property type="term" value="P:proteolysis"/>
    <property type="evidence" value="ECO:0007669"/>
    <property type="project" value="UniProtKB-KW"/>
</dbReference>
<dbReference type="GO" id="GO:0060359">
    <property type="term" value="P:response to ammonium ion"/>
    <property type="evidence" value="ECO:0000315"/>
    <property type="project" value="TAIR"/>
</dbReference>
<dbReference type="GO" id="GO:0043157">
    <property type="term" value="P:response to cation stress"/>
    <property type="evidence" value="ECO:0000315"/>
    <property type="project" value="TAIR"/>
</dbReference>
<dbReference type="GO" id="GO:0009723">
    <property type="term" value="P:response to ethylene"/>
    <property type="evidence" value="ECO:0000270"/>
    <property type="project" value="TAIR"/>
</dbReference>
<dbReference type="GO" id="GO:0009416">
    <property type="term" value="P:response to light stimulus"/>
    <property type="evidence" value="ECO:0000270"/>
    <property type="project" value="TAIR"/>
</dbReference>
<dbReference type="GO" id="GO:0010027">
    <property type="term" value="P:thylakoid membrane organization"/>
    <property type="evidence" value="ECO:0000315"/>
    <property type="project" value="TAIR"/>
</dbReference>
<dbReference type="CDD" id="cd06160">
    <property type="entry name" value="S2P-M50_like_2"/>
    <property type="match status" value="1"/>
</dbReference>
<dbReference type="InterPro" id="IPR044838">
    <property type="entry name" value="EGY1-like"/>
</dbReference>
<dbReference type="InterPro" id="IPR008915">
    <property type="entry name" value="Peptidase_M50"/>
</dbReference>
<dbReference type="PANTHER" id="PTHR31412">
    <property type="entry name" value="ZINC METALLOPROTEASE EGY1"/>
    <property type="match status" value="1"/>
</dbReference>
<dbReference type="PANTHER" id="PTHR31412:SF0">
    <property type="entry name" value="ZINC METALLOPROTEASE EGY1, CHLOROPLASTIC-RELATED"/>
    <property type="match status" value="1"/>
</dbReference>
<dbReference type="Pfam" id="PF02163">
    <property type="entry name" value="Peptidase_M50"/>
    <property type="match status" value="1"/>
</dbReference>
<dbReference type="PROSITE" id="PS00142">
    <property type="entry name" value="ZINC_PROTEASE"/>
    <property type="match status" value="1"/>
</dbReference>
<name>EGY1_ARATH</name>
<gene>
    <name type="primary">EGY1</name>
    <name type="synonym">AMOS1</name>
    <name type="ordered locus">At5g35220</name>
    <name type="ORF">T25C13.100</name>
</gene>
<protein>
    <recommendedName>
        <fullName>Probable zinc metalloprotease EGY1, chloroplastic</fullName>
        <ecNumber>3.4.24.-</ecNumber>
    </recommendedName>
    <alternativeName>
        <fullName>Protein AMMONIUM OVERLY SENSITIVE 1</fullName>
    </alternativeName>
    <alternativeName>
        <fullName>Protein ETHYLENE-DEPENDENT GRAVITROPISM-DEFICIENT AND YELLOW-GREEN 1</fullName>
        <shortName>AtEGY1</shortName>
    </alternativeName>
</protein>
<accession>Q949Y5</accession>
<accession>Q9LHR6</accession>